<reference key="1">
    <citation type="journal article" date="1995" name="J. Gen. Virol.">
        <title>Sequence of RNA 2 of a nematode-transmissible isolate of tobacco rattle virus.</title>
        <authorList>
            <person name="Hernandez C."/>
            <person name="Mathis A."/>
            <person name="Brown D.J."/>
            <person name="Bol J.F."/>
        </authorList>
    </citation>
    <scope>NUCLEOTIDE SEQUENCE [GENOMIC RNA]</scope>
</reference>
<reference key="2">
    <citation type="submission" date="1999-05" db="EMBL/GenBank/DDBJ databases">
        <authorList>
            <person name="Hernandez C."/>
        </authorList>
    </citation>
    <scope>SEQUENCE REVISION</scope>
</reference>
<reference key="3">
    <citation type="journal article" date="1999" name="J. Gen. Virol.">
        <title>Nonstructural proteins of Tobacco rattle virus which have a role in nematode-transmission: expression pattern and interaction with viral coat protein.</title>
        <authorList>
            <person name="Visser P.B."/>
            <person name="Bol J.F."/>
        </authorList>
    </citation>
    <scope>FUNCTION</scope>
</reference>
<feature type="chain" id="PRO_0000409294" description="32 kDa protein">
    <location>
        <begin position="1"/>
        <end position="292"/>
    </location>
</feature>
<dbReference type="EMBL" id="Z36974">
    <property type="protein sequence ID" value="CAA85423.2"/>
    <property type="status" value="ALT_TERM"/>
    <property type="molecule type" value="Genomic_RNA"/>
</dbReference>
<dbReference type="KEGG" id="vg:962135"/>
<dbReference type="Proteomes" id="UP000001669">
    <property type="component" value="Genome"/>
</dbReference>
<sequence>MVIVTKGAYVHEFPRTAEWNAFAQILSREHGYIVSDTALEGAAKPYYVVNSSGFYGPPGLDGLISTLDRELQYYSKLLYEIKGLGVMSDENVFGTQYDGNLTARVSRLERRLNPMSNIGSSSRPWSEHKSAVKKADLERYVYANFADWSNHLGPAGKSTREVVKYLMYRMGYYSDTSGIGHDLNYKHFRDHLDIYNLTCSPPFLVSSAVVDGHYARDKFVSFQGVCGFNPMFPDVNGLKSSWSLGRQLDDIRSQKKEVSGTNQEPNYYYDGDTLKPIGSGASVVGERRPGWR</sequence>
<accession>Q88899</accession>
<organismHost>
    <name type="scientific">Bidens pilosa</name>
    <name type="common">Hairy beggarticks</name>
    <name type="synonym">Cobbler's pegs</name>
    <dbReference type="NCBI Taxonomy" id="42337"/>
</organismHost>
<organismHost>
    <name type="scientific">Capsicum annuum</name>
    <name type="common">Capsicum pepper</name>
    <dbReference type="NCBI Taxonomy" id="4072"/>
</organismHost>
<organismHost>
    <name type="scientific">Cynara cardunculus var. scolymus</name>
    <name type="common">Globe artichoke</name>
    <name type="synonym">Cynara scolymus</name>
    <dbReference type="NCBI Taxonomy" id="59895"/>
</organismHost>
<organismHost>
    <name type="scientific">Solanum lycopersicum</name>
    <name type="common">Tomato</name>
    <name type="synonym">Lycopersicon esculentum</name>
    <dbReference type="NCBI Taxonomy" id="4081"/>
</organismHost>
<keyword id="KW-1185">Reference proteome</keyword>
<name>P32_TRVPP</name>
<organism>
    <name type="scientific">Tobacco rattle virus (isolate PpK20)</name>
    <name type="common">TRV</name>
    <dbReference type="NCBI Taxonomy" id="652939"/>
    <lineage>
        <taxon>Viruses</taxon>
        <taxon>Riboviria</taxon>
        <taxon>Orthornavirae</taxon>
        <taxon>Kitrinoviricota</taxon>
        <taxon>Alsuviricetes</taxon>
        <taxon>Martellivirales</taxon>
        <taxon>Virgaviridae</taxon>
        <taxon>Tobravirus</taxon>
        <taxon>Tobacco rattle virus</taxon>
    </lineage>
</organism>
<protein>
    <recommendedName>
        <fullName>32 kDa protein</fullName>
    </recommendedName>
</protein>
<comment type="function">
    <text evidence="1">May be involved in transmission by vector nematode species.</text>
</comment>
<comment type="sequence caution" evidence="2">
    <conflict type="erroneous termination">
        <sequence resource="EMBL-CDS" id="CAA85423"/>
    </conflict>
    <text>Truncated C-terminus.</text>
</comment>
<evidence type="ECO:0000269" key="1">
    <source>
    </source>
</evidence>
<evidence type="ECO:0000305" key="2"/>
<proteinExistence type="predicted"/>